<proteinExistence type="evidence at protein level"/>
<reference key="1">
    <citation type="journal article" date="2000" name="Proc. Natl. Acad. Sci. U.S.A.">
        <title>Gene expression profiling in the human hypothalamus-pituitary-adrenal axis and full-length cDNA cloning.</title>
        <authorList>
            <person name="Hu R.-M."/>
            <person name="Han Z.-G."/>
            <person name="Song H.-D."/>
            <person name="Peng Y.-D."/>
            <person name="Huang Q.-H."/>
            <person name="Ren S.-X."/>
            <person name="Gu Y.-J."/>
            <person name="Huang C.-H."/>
            <person name="Li Y.-B."/>
            <person name="Jiang C.-L."/>
            <person name="Fu G."/>
            <person name="Zhang Q.-H."/>
            <person name="Gu B.-W."/>
            <person name="Dai M."/>
            <person name="Mao Y.-F."/>
            <person name="Gao G.-F."/>
            <person name="Rong R."/>
            <person name="Ye M."/>
            <person name="Zhou J."/>
            <person name="Xu S.-H."/>
            <person name="Gu J."/>
            <person name="Shi J.-X."/>
            <person name="Jin W.-R."/>
            <person name="Zhang C.-K."/>
            <person name="Wu T.-M."/>
            <person name="Huang G.-Y."/>
            <person name="Chen Z."/>
            <person name="Chen M.-D."/>
            <person name="Chen J.-L."/>
        </authorList>
    </citation>
    <scope>NUCLEOTIDE SEQUENCE [LARGE SCALE MRNA]</scope>
    <scope>TISSUE SPECIFICITY</scope>
    <source>
        <tissue>Adrenal gland</tissue>
    </source>
</reference>
<reference key="2">
    <citation type="journal article" date="2002" name="Mol. Med.">
        <title>The Chediak-Higashi protein interacts with SNARE complex and signal transduction proteins.</title>
        <authorList>
            <person name="Tchernev V.T."/>
            <person name="Mansfield T.A."/>
            <person name="Giot L."/>
            <person name="Kumar A.M."/>
            <person name="Nandabalan K."/>
            <person name="Li Y."/>
            <person name="Mishra V.S."/>
            <person name="Detter J.C."/>
            <person name="Rothberg J.M."/>
            <person name="Wallace M.R."/>
            <person name="Southwick F.S."/>
            <person name="Kingsmore S.F."/>
        </authorList>
    </citation>
    <scope>NUCLEOTIDE SEQUENCE [MRNA]</scope>
</reference>
<reference key="3">
    <citation type="journal article" date="2004" name="Nat. Genet.">
        <title>Complete sequencing and characterization of 21,243 full-length human cDNAs.</title>
        <authorList>
            <person name="Ota T."/>
            <person name="Suzuki Y."/>
            <person name="Nishikawa T."/>
            <person name="Otsuki T."/>
            <person name="Sugiyama T."/>
            <person name="Irie R."/>
            <person name="Wakamatsu A."/>
            <person name="Hayashi K."/>
            <person name="Sato H."/>
            <person name="Nagai K."/>
            <person name="Kimura K."/>
            <person name="Makita H."/>
            <person name="Sekine M."/>
            <person name="Obayashi M."/>
            <person name="Nishi T."/>
            <person name="Shibahara T."/>
            <person name="Tanaka T."/>
            <person name="Ishii S."/>
            <person name="Yamamoto J."/>
            <person name="Saito K."/>
            <person name="Kawai Y."/>
            <person name="Isono Y."/>
            <person name="Nakamura Y."/>
            <person name="Nagahari K."/>
            <person name="Murakami K."/>
            <person name="Yasuda T."/>
            <person name="Iwayanagi T."/>
            <person name="Wagatsuma M."/>
            <person name="Shiratori A."/>
            <person name="Sudo H."/>
            <person name="Hosoiri T."/>
            <person name="Kaku Y."/>
            <person name="Kodaira H."/>
            <person name="Kondo H."/>
            <person name="Sugawara M."/>
            <person name="Takahashi M."/>
            <person name="Kanda K."/>
            <person name="Yokoi T."/>
            <person name="Furuya T."/>
            <person name="Kikkawa E."/>
            <person name="Omura Y."/>
            <person name="Abe K."/>
            <person name="Kamihara K."/>
            <person name="Katsuta N."/>
            <person name="Sato K."/>
            <person name="Tanikawa M."/>
            <person name="Yamazaki M."/>
            <person name="Ninomiya K."/>
            <person name="Ishibashi T."/>
            <person name="Yamashita H."/>
            <person name="Murakawa K."/>
            <person name="Fujimori K."/>
            <person name="Tanai H."/>
            <person name="Kimata M."/>
            <person name="Watanabe M."/>
            <person name="Hiraoka S."/>
            <person name="Chiba Y."/>
            <person name="Ishida S."/>
            <person name="Ono Y."/>
            <person name="Takiguchi S."/>
            <person name="Watanabe S."/>
            <person name="Yosida M."/>
            <person name="Hotuta T."/>
            <person name="Kusano J."/>
            <person name="Kanehori K."/>
            <person name="Takahashi-Fujii A."/>
            <person name="Hara H."/>
            <person name="Tanase T.-O."/>
            <person name="Nomura Y."/>
            <person name="Togiya S."/>
            <person name="Komai F."/>
            <person name="Hara R."/>
            <person name="Takeuchi K."/>
            <person name="Arita M."/>
            <person name="Imose N."/>
            <person name="Musashino K."/>
            <person name="Yuuki H."/>
            <person name="Oshima A."/>
            <person name="Sasaki N."/>
            <person name="Aotsuka S."/>
            <person name="Yoshikawa Y."/>
            <person name="Matsunawa H."/>
            <person name="Ichihara T."/>
            <person name="Shiohata N."/>
            <person name="Sano S."/>
            <person name="Moriya S."/>
            <person name="Momiyama H."/>
            <person name="Satoh N."/>
            <person name="Takami S."/>
            <person name="Terashima Y."/>
            <person name="Suzuki O."/>
            <person name="Nakagawa S."/>
            <person name="Senoh A."/>
            <person name="Mizoguchi H."/>
            <person name="Goto Y."/>
            <person name="Shimizu F."/>
            <person name="Wakebe H."/>
            <person name="Hishigaki H."/>
            <person name="Watanabe T."/>
            <person name="Sugiyama A."/>
            <person name="Takemoto M."/>
            <person name="Kawakami B."/>
            <person name="Yamazaki M."/>
            <person name="Watanabe K."/>
            <person name="Kumagai A."/>
            <person name="Itakura S."/>
            <person name="Fukuzumi Y."/>
            <person name="Fujimori Y."/>
            <person name="Komiyama M."/>
            <person name="Tashiro H."/>
            <person name="Tanigami A."/>
            <person name="Fujiwara T."/>
            <person name="Ono T."/>
            <person name="Yamada K."/>
            <person name="Fujii Y."/>
            <person name="Ozaki K."/>
            <person name="Hirao M."/>
            <person name="Ohmori Y."/>
            <person name="Kawabata A."/>
            <person name="Hikiji T."/>
            <person name="Kobatake N."/>
            <person name="Inagaki H."/>
            <person name="Ikema Y."/>
            <person name="Okamoto S."/>
            <person name="Okitani R."/>
            <person name="Kawakami T."/>
            <person name="Noguchi S."/>
            <person name="Itoh T."/>
            <person name="Shigeta K."/>
            <person name="Senba T."/>
            <person name="Matsumura K."/>
            <person name="Nakajima Y."/>
            <person name="Mizuno T."/>
            <person name="Morinaga M."/>
            <person name="Sasaki M."/>
            <person name="Togashi T."/>
            <person name="Oyama M."/>
            <person name="Hata H."/>
            <person name="Watanabe M."/>
            <person name="Komatsu T."/>
            <person name="Mizushima-Sugano J."/>
            <person name="Satoh T."/>
            <person name="Shirai Y."/>
            <person name="Takahashi Y."/>
            <person name="Nakagawa K."/>
            <person name="Okumura K."/>
            <person name="Nagase T."/>
            <person name="Nomura N."/>
            <person name="Kikuchi H."/>
            <person name="Masuho Y."/>
            <person name="Yamashita R."/>
            <person name="Nakai K."/>
            <person name="Yada T."/>
            <person name="Nakamura Y."/>
            <person name="Ohara O."/>
            <person name="Isogai T."/>
            <person name="Sugano S."/>
        </authorList>
    </citation>
    <scope>NUCLEOTIDE SEQUENCE [LARGE SCALE MRNA]</scope>
    <source>
        <tissue>Adipose tissue</tissue>
    </source>
</reference>
<reference key="4">
    <citation type="submission" date="2004-06" db="EMBL/GenBank/DDBJ databases">
        <title>Cloning of human full open reading frames in Gateway(TM) system entry vector (pDONR201).</title>
        <authorList>
            <person name="Ebert L."/>
            <person name="Schick M."/>
            <person name="Neubert P."/>
            <person name="Schatten R."/>
            <person name="Henze S."/>
            <person name="Korn B."/>
        </authorList>
    </citation>
    <scope>NUCLEOTIDE SEQUENCE [LARGE SCALE MRNA]</scope>
</reference>
<reference key="5">
    <citation type="submission" date="2005-09" db="EMBL/GenBank/DDBJ databases">
        <authorList>
            <person name="Mural R.J."/>
            <person name="Istrail S."/>
            <person name="Sutton G.G."/>
            <person name="Florea L."/>
            <person name="Halpern A.L."/>
            <person name="Mobarry C.M."/>
            <person name="Lippert R."/>
            <person name="Walenz B."/>
            <person name="Shatkay H."/>
            <person name="Dew I."/>
            <person name="Miller J.R."/>
            <person name="Flanigan M.J."/>
            <person name="Edwards N.J."/>
            <person name="Bolanos R."/>
            <person name="Fasulo D."/>
            <person name="Halldorsson B.V."/>
            <person name="Hannenhalli S."/>
            <person name="Turner R."/>
            <person name="Yooseph S."/>
            <person name="Lu F."/>
            <person name="Nusskern D.R."/>
            <person name="Shue B.C."/>
            <person name="Zheng X.H."/>
            <person name="Zhong F."/>
            <person name="Delcher A.L."/>
            <person name="Huson D.H."/>
            <person name="Kravitz S.A."/>
            <person name="Mouchard L."/>
            <person name="Reinert K."/>
            <person name="Remington K.A."/>
            <person name="Clark A.G."/>
            <person name="Waterman M.S."/>
            <person name="Eichler E.E."/>
            <person name="Adams M.D."/>
            <person name="Hunkapiller M.W."/>
            <person name="Myers E.W."/>
            <person name="Venter J.C."/>
        </authorList>
    </citation>
    <scope>NUCLEOTIDE SEQUENCE [LARGE SCALE GENOMIC DNA]</scope>
</reference>
<reference key="6">
    <citation type="journal article" date="2004" name="Genome Res.">
        <title>The status, quality, and expansion of the NIH full-length cDNA project: the Mammalian Gene Collection (MGC).</title>
        <authorList>
            <consortium name="The MGC Project Team"/>
        </authorList>
    </citation>
    <scope>NUCLEOTIDE SEQUENCE [LARGE SCALE MRNA]</scope>
    <source>
        <tissue>Mammary gland</tissue>
    </source>
</reference>
<reference key="7">
    <citation type="journal article" date="2001" name="Genomics">
        <title>The human mitochondrial ribosomal protein genes: mapping of 54 genes to the chromosomes and implications for human disorders.</title>
        <authorList>
            <person name="Kenmochi N."/>
            <person name="Suzuki T."/>
            <person name="Uechi T."/>
            <person name="Magoori M."/>
            <person name="Kuniba M."/>
            <person name="Higa S."/>
            <person name="Watanabe K."/>
            <person name="Tanaka T."/>
        </authorList>
    </citation>
    <scope>NUCLEOTIDE SEQUENCE [GENOMIC DNA] OF 144-175</scope>
</reference>
<reference key="8">
    <citation type="journal article" date="2011" name="BMC Syst. Biol.">
        <title>Initial characterization of the human central proteome.</title>
        <authorList>
            <person name="Burkard T.R."/>
            <person name="Planyavsky M."/>
            <person name="Kaupe I."/>
            <person name="Breitwieser F.P."/>
            <person name="Buerckstuemmer T."/>
            <person name="Bennett K.L."/>
            <person name="Superti-Furga G."/>
            <person name="Colinge J."/>
        </authorList>
    </citation>
    <scope>IDENTIFICATION BY MASS SPECTROMETRY [LARGE SCALE ANALYSIS]</scope>
</reference>
<reference key="9">
    <citation type="journal article" date="2015" name="Proteomics">
        <title>N-terminome analysis of the human mitochondrial proteome.</title>
        <authorList>
            <person name="Vaca Jacome A.S."/>
            <person name="Rabilloud T."/>
            <person name="Schaeffer-Reiss C."/>
            <person name="Rompais M."/>
            <person name="Ayoub D."/>
            <person name="Lane L."/>
            <person name="Bairoch A."/>
            <person name="Van Dorsselaer A."/>
            <person name="Carapito C."/>
        </authorList>
    </citation>
    <scope>IDENTIFICATION BY MASS SPECTROMETRY [LARGE SCALE ANALYSIS]</scope>
</reference>
<reference key="10">
    <citation type="submission" date="2005-11" db="PDB data bank">
        <title>Solution structure of the mitochondrial ribosomal protein L17 isolog.</title>
        <authorList>
            <consortium name="RIKEN structural genomics initiative (RSGI)"/>
        </authorList>
    </citation>
    <scope>STRUCTURE BY NMR OF 28-136</scope>
</reference>
<reference evidence="10" key="11">
    <citation type="journal article" date="2014" name="Science">
        <title>Structure of the large ribosomal subunit from human mitochondria.</title>
        <authorList>
            <person name="Brown A."/>
            <person name="Amunts A."/>
            <person name="Bai X.C."/>
            <person name="Sugimoto Y."/>
            <person name="Edwards P.C."/>
            <person name="Murshudov G."/>
            <person name="Scheres S.H."/>
            <person name="Ramakrishnan V."/>
        </authorList>
    </citation>
    <scope>STRUCTURE BY ELECTRON MICROSCOPY (3.40 ANGSTROMS)</scope>
    <scope>SUBCELLULAR LOCATION</scope>
    <scope>SUBUNIT</scope>
</reference>
<reference evidence="11" key="12">
    <citation type="journal article" date="2015" name="Science">
        <title>Ribosome. The structure of the human mitochondrial ribosome.</title>
        <authorList>
            <person name="Amunts A."/>
            <person name="Brown A."/>
            <person name="Toots J."/>
            <person name="Scheres S.H."/>
            <person name="Ramakrishnan V."/>
        </authorList>
    </citation>
    <scope>STRUCTURE BY ELECTRON MICROSCOPY (3.50 ANGSTROMS)</scope>
    <scope>SUBCELLULAR LOCATION</scope>
    <scope>SUBUNIT</scope>
</reference>
<reference evidence="12 13" key="13">
    <citation type="journal article" date="2017" name="Nat. Struct. Mol. Biol.">
        <title>Structures of the human mitochondrial ribosome in native states of assembly.</title>
        <authorList>
            <person name="Brown A."/>
            <person name="Rathore S."/>
            <person name="Kimanius D."/>
            <person name="Aibara S."/>
            <person name="Bai X.C."/>
            <person name="Rorbach J."/>
            <person name="Amunts A."/>
            <person name="Ramakrishnan V."/>
        </authorList>
    </citation>
    <scope>STRUCTURE BY ELECTRON MICROSCOPY (3.03 ANGSTROMS)</scope>
    <scope>SUBCELLULAR LOCATION</scope>
    <scope>SUBUNIT</scope>
</reference>
<reference evidence="14 15" key="14">
    <citation type="journal article" date="2022" name="Nat. Commun.">
        <title>A late-stage assembly checkpoint of the human mitochondrial ribosome large subunit.</title>
        <authorList>
            <person name="Rebelo-Guiomar P."/>
            <person name="Pellegrino S."/>
            <person name="Dent K.C."/>
            <person name="Sas-Chen A."/>
            <person name="Miller-Fleming L."/>
            <person name="Garone C."/>
            <person name="Van Haute L."/>
            <person name="Rogan J.F."/>
            <person name="Dinan A."/>
            <person name="Firth A.E."/>
            <person name="Andrews B."/>
            <person name="Whitworth A.J."/>
            <person name="Schwartz S."/>
            <person name="Warren A.J."/>
            <person name="Minczuk M."/>
        </authorList>
    </citation>
    <scope>STRUCTURE BY ELECTRON MICROSCOPY (2.9 ANGSTROMS) IN COMPLEX WITH MTLSU</scope>
    <scope>SUBUNIT</scope>
</reference>
<name>RM17_HUMAN</name>
<protein>
    <recommendedName>
        <fullName evidence="8">Large ribosomal subunit protein bL17m</fullName>
    </recommendedName>
    <alternativeName>
        <fullName>39S ribosomal protein L17, mitochondrial</fullName>
        <shortName>L17mt</shortName>
        <shortName>MRP-L17</shortName>
    </alternativeName>
    <alternativeName>
        <fullName>LYST-interacting protein 2</fullName>
    </alternativeName>
</protein>
<keyword id="KW-0002">3D-structure</keyword>
<keyword id="KW-0496">Mitochondrion</keyword>
<keyword id="KW-1267">Proteomics identification</keyword>
<keyword id="KW-1185">Reference proteome</keyword>
<keyword id="KW-0687">Ribonucleoprotein</keyword>
<keyword id="KW-0689">Ribosomal protein</keyword>
<keyword id="KW-0809">Transit peptide</keyword>
<dbReference type="EMBL" id="AF164797">
    <property type="protein sequence ID" value="AAF80761.1"/>
    <property type="molecule type" value="mRNA"/>
</dbReference>
<dbReference type="EMBL" id="AF141338">
    <property type="protein sequence ID" value="AAG49441.1"/>
    <property type="status" value="ALT_FRAME"/>
    <property type="molecule type" value="mRNA"/>
</dbReference>
<dbReference type="EMBL" id="AK026857">
    <property type="protein sequence ID" value="BAB15575.1"/>
    <property type="molecule type" value="mRNA"/>
</dbReference>
<dbReference type="EMBL" id="CR457177">
    <property type="protein sequence ID" value="CAG33458.1"/>
    <property type="molecule type" value="mRNA"/>
</dbReference>
<dbReference type="EMBL" id="CH471064">
    <property type="protein sequence ID" value="EAW68681.1"/>
    <property type="molecule type" value="Genomic_DNA"/>
</dbReference>
<dbReference type="EMBL" id="CH471064">
    <property type="protein sequence ID" value="EAW68682.1"/>
    <property type="molecule type" value="Genomic_DNA"/>
</dbReference>
<dbReference type="EMBL" id="BC012306">
    <property type="protein sequence ID" value="AAH12306.1"/>
    <property type="molecule type" value="mRNA"/>
</dbReference>
<dbReference type="EMBL" id="AB051620">
    <property type="protein sequence ID" value="BAB54948.1"/>
    <property type="molecule type" value="Genomic_DNA"/>
</dbReference>
<dbReference type="CCDS" id="CCDS31412.1"/>
<dbReference type="RefSeq" id="NP_071344.1">
    <property type="nucleotide sequence ID" value="NM_022061.4"/>
</dbReference>
<dbReference type="PDB" id="2CQM">
    <property type="method" value="NMR"/>
    <property type="chains" value="A=28-136"/>
</dbReference>
<dbReference type="PDB" id="3J7Y">
    <property type="method" value="EM"/>
    <property type="resolution" value="3.40 A"/>
    <property type="chains" value="O=1-175"/>
</dbReference>
<dbReference type="PDB" id="3J9M">
    <property type="method" value="EM"/>
    <property type="resolution" value="3.50 A"/>
    <property type="chains" value="O=1-175"/>
</dbReference>
<dbReference type="PDB" id="5OOL">
    <property type="method" value="EM"/>
    <property type="resolution" value="3.06 A"/>
    <property type="chains" value="O=1-175"/>
</dbReference>
<dbReference type="PDB" id="5OOM">
    <property type="method" value="EM"/>
    <property type="resolution" value="3.03 A"/>
    <property type="chains" value="O=1-175"/>
</dbReference>
<dbReference type="PDB" id="6I9R">
    <property type="method" value="EM"/>
    <property type="resolution" value="3.90 A"/>
    <property type="chains" value="O=1-175"/>
</dbReference>
<dbReference type="PDB" id="6NU2">
    <property type="method" value="EM"/>
    <property type="resolution" value="3.90 A"/>
    <property type="chains" value="O=9-160"/>
</dbReference>
<dbReference type="PDB" id="6NU3">
    <property type="method" value="EM"/>
    <property type="resolution" value="4.40 A"/>
    <property type="chains" value="O=1-175"/>
</dbReference>
<dbReference type="PDB" id="6VLZ">
    <property type="method" value="EM"/>
    <property type="resolution" value="2.97 A"/>
    <property type="chains" value="O=1-175"/>
</dbReference>
<dbReference type="PDB" id="6VMI">
    <property type="method" value="EM"/>
    <property type="resolution" value="2.96 A"/>
    <property type="chains" value="O=1-175"/>
</dbReference>
<dbReference type="PDB" id="6ZM5">
    <property type="method" value="EM"/>
    <property type="resolution" value="2.89 A"/>
    <property type="chains" value="O=1-175"/>
</dbReference>
<dbReference type="PDB" id="6ZM6">
    <property type="method" value="EM"/>
    <property type="resolution" value="2.59 A"/>
    <property type="chains" value="O=1-175"/>
</dbReference>
<dbReference type="PDB" id="6ZS9">
    <property type="method" value="EM"/>
    <property type="resolution" value="4.00 A"/>
    <property type="chains" value="XO=1-175"/>
</dbReference>
<dbReference type="PDB" id="6ZSA">
    <property type="method" value="EM"/>
    <property type="resolution" value="4.00 A"/>
    <property type="chains" value="XO=1-175"/>
</dbReference>
<dbReference type="PDB" id="6ZSB">
    <property type="method" value="EM"/>
    <property type="resolution" value="4.50 A"/>
    <property type="chains" value="XO=1-175"/>
</dbReference>
<dbReference type="PDB" id="6ZSC">
    <property type="method" value="EM"/>
    <property type="resolution" value="3.50 A"/>
    <property type="chains" value="XO=1-175"/>
</dbReference>
<dbReference type="PDB" id="6ZSD">
    <property type="method" value="EM"/>
    <property type="resolution" value="3.70 A"/>
    <property type="chains" value="XO=1-175"/>
</dbReference>
<dbReference type="PDB" id="6ZSE">
    <property type="method" value="EM"/>
    <property type="resolution" value="5.00 A"/>
    <property type="chains" value="XO=1-175"/>
</dbReference>
<dbReference type="PDB" id="6ZSG">
    <property type="method" value="EM"/>
    <property type="resolution" value="4.00 A"/>
    <property type="chains" value="XO=1-175"/>
</dbReference>
<dbReference type="PDB" id="7A5F">
    <property type="method" value="EM"/>
    <property type="resolution" value="4.40 A"/>
    <property type="chains" value="O3=1-175"/>
</dbReference>
<dbReference type="PDB" id="7A5G">
    <property type="method" value="EM"/>
    <property type="resolution" value="4.33 A"/>
    <property type="chains" value="O3=1-175"/>
</dbReference>
<dbReference type="PDB" id="7A5H">
    <property type="method" value="EM"/>
    <property type="resolution" value="3.30 A"/>
    <property type="chains" value="O=1-175"/>
</dbReference>
<dbReference type="PDB" id="7A5I">
    <property type="method" value="EM"/>
    <property type="resolution" value="3.70 A"/>
    <property type="chains" value="O3=1-175"/>
</dbReference>
<dbReference type="PDB" id="7A5J">
    <property type="method" value="EM"/>
    <property type="resolution" value="3.10 A"/>
    <property type="chains" value="O=1-175"/>
</dbReference>
<dbReference type="PDB" id="7A5K">
    <property type="method" value="EM"/>
    <property type="resolution" value="3.70 A"/>
    <property type="chains" value="O3=1-175"/>
</dbReference>
<dbReference type="PDB" id="7L08">
    <property type="method" value="EM"/>
    <property type="resolution" value="3.49 A"/>
    <property type="chains" value="O=1-175"/>
</dbReference>
<dbReference type="PDB" id="7L20">
    <property type="method" value="EM"/>
    <property type="resolution" value="3.15 A"/>
    <property type="chains" value="O=1-175"/>
</dbReference>
<dbReference type="PDB" id="7O9K">
    <property type="method" value="EM"/>
    <property type="resolution" value="3.10 A"/>
    <property type="chains" value="O=1-175"/>
</dbReference>
<dbReference type="PDB" id="7O9M">
    <property type="method" value="EM"/>
    <property type="resolution" value="2.50 A"/>
    <property type="chains" value="O=1-175"/>
</dbReference>
<dbReference type="PDB" id="7ODR">
    <property type="method" value="EM"/>
    <property type="resolution" value="2.90 A"/>
    <property type="chains" value="O=1-175"/>
</dbReference>
<dbReference type="PDB" id="7ODS">
    <property type="method" value="EM"/>
    <property type="resolution" value="3.10 A"/>
    <property type="chains" value="O=1-175"/>
</dbReference>
<dbReference type="PDB" id="7ODT">
    <property type="method" value="EM"/>
    <property type="resolution" value="3.10 A"/>
    <property type="chains" value="O=1-175"/>
</dbReference>
<dbReference type="PDB" id="7OF0">
    <property type="method" value="EM"/>
    <property type="resolution" value="2.20 A"/>
    <property type="chains" value="O=1-175"/>
</dbReference>
<dbReference type="PDB" id="7OF2">
    <property type="method" value="EM"/>
    <property type="resolution" value="2.70 A"/>
    <property type="chains" value="O=1-175"/>
</dbReference>
<dbReference type="PDB" id="7OF3">
    <property type="method" value="EM"/>
    <property type="resolution" value="2.70 A"/>
    <property type="chains" value="O=1-175"/>
</dbReference>
<dbReference type="PDB" id="7OF4">
    <property type="method" value="EM"/>
    <property type="resolution" value="2.70 A"/>
    <property type="chains" value="O=1-175"/>
</dbReference>
<dbReference type="PDB" id="7OF5">
    <property type="method" value="EM"/>
    <property type="resolution" value="2.90 A"/>
    <property type="chains" value="O=1-175"/>
</dbReference>
<dbReference type="PDB" id="7OF6">
    <property type="method" value="EM"/>
    <property type="resolution" value="2.60 A"/>
    <property type="chains" value="O=1-175"/>
</dbReference>
<dbReference type="PDB" id="7OF7">
    <property type="method" value="EM"/>
    <property type="resolution" value="2.50 A"/>
    <property type="chains" value="O=1-175"/>
</dbReference>
<dbReference type="PDB" id="7OG4">
    <property type="method" value="EM"/>
    <property type="resolution" value="3.80 A"/>
    <property type="chains" value="XO=1-175"/>
</dbReference>
<dbReference type="PDB" id="7OI6">
    <property type="method" value="EM"/>
    <property type="resolution" value="5.70 A"/>
    <property type="chains" value="O=1-175"/>
</dbReference>
<dbReference type="PDB" id="7OI7">
    <property type="method" value="EM"/>
    <property type="resolution" value="3.50 A"/>
    <property type="chains" value="O=1-175"/>
</dbReference>
<dbReference type="PDB" id="7OI8">
    <property type="method" value="EM"/>
    <property type="resolution" value="3.50 A"/>
    <property type="chains" value="O=1-175"/>
</dbReference>
<dbReference type="PDB" id="7OI9">
    <property type="method" value="EM"/>
    <property type="resolution" value="3.30 A"/>
    <property type="chains" value="O=1-175"/>
</dbReference>
<dbReference type="PDB" id="7OIA">
    <property type="method" value="EM"/>
    <property type="resolution" value="3.20 A"/>
    <property type="chains" value="O=1-175"/>
</dbReference>
<dbReference type="PDB" id="7OIB">
    <property type="method" value="EM"/>
    <property type="resolution" value="3.30 A"/>
    <property type="chains" value="O=1-175"/>
</dbReference>
<dbReference type="PDB" id="7OIC">
    <property type="method" value="EM"/>
    <property type="resolution" value="3.10 A"/>
    <property type="chains" value="O=1-175"/>
</dbReference>
<dbReference type="PDB" id="7OID">
    <property type="method" value="EM"/>
    <property type="resolution" value="3.70 A"/>
    <property type="chains" value="O=1-175"/>
</dbReference>
<dbReference type="PDB" id="7OIE">
    <property type="method" value="EM"/>
    <property type="resolution" value="3.50 A"/>
    <property type="chains" value="O=1-175"/>
</dbReference>
<dbReference type="PDB" id="7PD3">
    <property type="method" value="EM"/>
    <property type="resolution" value="3.40 A"/>
    <property type="chains" value="O=1-175"/>
</dbReference>
<dbReference type="PDB" id="7PO4">
    <property type="method" value="EM"/>
    <property type="resolution" value="2.56 A"/>
    <property type="chains" value="O=1-175"/>
</dbReference>
<dbReference type="PDB" id="7QH6">
    <property type="method" value="EM"/>
    <property type="resolution" value="3.08 A"/>
    <property type="chains" value="O=1-175"/>
</dbReference>
<dbReference type="PDB" id="7QH7">
    <property type="method" value="EM"/>
    <property type="resolution" value="2.89 A"/>
    <property type="chains" value="O=9-160"/>
</dbReference>
<dbReference type="PDB" id="7QI4">
    <property type="method" value="EM"/>
    <property type="resolution" value="2.21 A"/>
    <property type="chains" value="O=1-175"/>
</dbReference>
<dbReference type="PDB" id="7QI5">
    <property type="method" value="EM"/>
    <property type="resolution" value="2.63 A"/>
    <property type="chains" value="O=1-175"/>
</dbReference>
<dbReference type="PDB" id="7QI6">
    <property type="method" value="EM"/>
    <property type="resolution" value="2.98 A"/>
    <property type="chains" value="O=1-175"/>
</dbReference>
<dbReference type="PDB" id="8ANY">
    <property type="method" value="EM"/>
    <property type="resolution" value="2.85 A"/>
    <property type="chains" value="O=1-175"/>
</dbReference>
<dbReference type="PDB" id="8K2A">
    <property type="method" value="EM"/>
    <property type="resolution" value="2.90 A"/>
    <property type="chains" value="LQ=1-175"/>
</dbReference>
<dbReference type="PDB" id="8K2B">
    <property type="method" value="EM"/>
    <property type="resolution" value="3.40 A"/>
    <property type="chains" value="LQ=1-175"/>
</dbReference>
<dbReference type="PDB" id="8OIR">
    <property type="method" value="EM"/>
    <property type="resolution" value="3.10 A"/>
    <property type="chains" value="BV=1-175"/>
</dbReference>
<dbReference type="PDB" id="8OIT">
    <property type="method" value="EM"/>
    <property type="resolution" value="2.90 A"/>
    <property type="chains" value="BV=1-175"/>
</dbReference>
<dbReference type="PDB" id="8PK0">
    <property type="method" value="EM"/>
    <property type="resolution" value="3.03 A"/>
    <property type="chains" value="O=1-175"/>
</dbReference>
<dbReference type="PDB" id="8QSJ">
    <property type="method" value="EM"/>
    <property type="resolution" value="3.00 A"/>
    <property type="chains" value="O=1-175"/>
</dbReference>
<dbReference type="PDB" id="8QU1">
    <property type="method" value="EM"/>
    <property type="resolution" value="2.74 A"/>
    <property type="chains" value="O=1-175"/>
</dbReference>
<dbReference type="PDB" id="8QU5">
    <property type="method" value="EM"/>
    <property type="resolution" value="2.42 A"/>
    <property type="chains" value="O=1-175"/>
</dbReference>
<dbReference type="PDB" id="8RRI">
    <property type="method" value="EM"/>
    <property type="resolution" value="2.40 A"/>
    <property type="chains" value="O=1-175"/>
</dbReference>
<dbReference type="PDB" id="8XT0">
    <property type="method" value="EM"/>
    <property type="resolution" value="3.20 A"/>
    <property type="chains" value="LQ=1-175"/>
</dbReference>
<dbReference type="PDB" id="8XT1">
    <property type="method" value="EM"/>
    <property type="resolution" value="3.10 A"/>
    <property type="chains" value="LQ=1-175"/>
</dbReference>
<dbReference type="PDB" id="8XT2">
    <property type="method" value="EM"/>
    <property type="resolution" value="3.30 A"/>
    <property type="chains" value="LQ=1-175"/>
</dbReference>
<dbReference type="PDB" id="8XT3">
    <property type="method" value="EM"/>
    <property type="resolution" value="3.10 A"/>
    <property type="chains" value="LQ=1-175"/>
</dbReference>
<dbReference type="PDBsum" id="2CQM"/>
<dbReference type="PDBsum" id="3J7Y"/>
<dbReference type="PDBsum" id="3J9M"/>
<dbReference type="PDBsum" id="5OOL"/>
<dbReference type="PDBsum" id="5OOM"/>
<dbReference type="PDBsum" id="6I9R"/>
<dbReference type="PDBsum" id="6NU2"/>
<dbReference type="PDBsum" id="6NU3"/>
<dbReference type="PDBsum" id="6VLZ"/>
<dbReference type="PDBsum" id="6VMI"/>
<dbReference type="PDBsum" id="6ZM5"/>
<dbReference type="PDBsum" id="6ZM6"/>
<dbReference type="PDBsum" id="6ZS9"/>
<dbReference type="PDBsum" id="6ZSA"/>
<dbReference type="PDBsum" id="6ZSB"/>
<dbReference type="PDBsum" id="6ZSC"/>
<dbReference type="PDBsum" id="6ZSD"/>
<dbReference type="PDBsum" id="6ZSE"/>
<dbReference type="PDBsum" id="6ZSG"/>
<dbReference type="PDBsum" id="7A5F"/>
<dbReference type="PDBsum" id="7A5G"/>
<dbReference type="PDBsum" id="7A5H"/>
<dbReference type="PDBsum" id="7A5I"/>
<dbReference type="PDBsum" id="7A5J"/>
<dbReference type="PDBsum" id="7A5K"/>
<dbReference type="PDBsum" id="7L08"/>
<dbReference type="PDBsum" id="7L20"/>
<dbReference type="PDBsum" id="7O9K"/>
<dbReference type="PDBsum" id="7O9M"/>
<dbReference type="PDBsum" id="7ODR"/>
<dbReference type="PDBsum" id="7ODS"/>
<dbReference type="PDBsum" id="7ODT"/>
<dbReference type="PDBsum" id="7OF0"/>
<dbReference type="PDBsum" id="7OF2"/>
<dbReference type="PDBsum" id="7OF3"/>
<dbReference type="PDBsum" id="7OF4"/>
<dbReference type="PDBsum" id="7OF5"/>
<dbReference type="PDBsum" id="7OF6"/>
<dbReference type="PDBsum" id="7OF7"/>
<dbReference type="PDBsum" id="7OG4"/>
<dbReference type="PDBsum" id="7OI6"/>
<dbReference type="PDBsum" id="7OI7"/>
<dbReference type="PDBsum" id="7OI8"/>
<dbReference type="PDBsum" id="7OI9"/>
<dbReference type="PDBsum" id="7OIA"/>
<dbReference type="PDBsum" id="7OIB"/>
<dbReference type="PDBsum" id="7OIC"/>
<dbReference type="PDBsum" id="7OID"/>
<dbReference type="PDBsum" id="7OIE"/>
<dbReference type="PDBsum" id="7PD3"/>
<dbReference type="PDBsum" id="7PO4"/>
<dbReference type="PDBsum" id="7QH6"/>
<dbReference type="PDBsum" id="7QH7"/>
<dbReference type="PDBsum" id="7QI4"/>
<dbReference type="PDBsum" id="7QI5"/>
<dbReference type="PDBsum" id="7QI6"/>
<dbReference type="PDBsum" id="8ANY"/>
<dbReference type="PDBsum" id="8K2A"/>
<dbReference type="PDBsum" id="8K2B"/>
<dbReference type="PDBsum" id="8OIR"/>
<dbReference type="PDBsum" id="8OIT"/>
<dbReference type="PDBsum" id="8PK0"/>
<dbReference type="PDBsum" id="8QSJ"/>
<dbReference type="PDBsum" id="8QU1"/>
<dbReference type="PDBsum" id="8QU5"/>
<dbReference type="PDBsum" id="8RRI"/>
<dbReference type="PDBsum" id="8XT0"/>
<dbReference type="PDBsum" id="8XT1"/>
<dbReference type="PDBsum" id="8XT2"/>
<dbReference type="PDBsum" id="8XT3"/>
<dbReference type="EMDB" id="EMD-0514"/>
<dbReference type="EMDB" id="EMD-0515"/>
<dbReference type="EMDB" id="EMD-11278"/>
<dbReference type="EMDB" id="EMD-11279"/>
<dbReference type="EMDB" id="EMD-11390"/>
<dbReference type="EMDB" id="EMD-11391"/>
<dbReference type="EMDB" id="EMD-11392"/>
<dbReference type="EMDB" id="EMD-11393"/>
<dbReference type="EMDB" id="EMD-11394"/>
<dbReference type="EMDB" id="EMD-11395"/>
<dbReference type="EMDB" id="EMD-11397"/>
<dbReference type="EMDB" id="EMD-11641"/>
<dbReference type="EMDB" id="EMD-11642"/>
<dbReference type="EMDB" id="EMD-11643"/>
<dbReference type="EMDB" id="EMD-11644"/>
<dbReference type="EMDB" id="EMD-11645"/>
<dbReference type="EMDB" id="EMD-11646"/>
<dbReference type="EMDB" id="EMD-12763"/>
<dbReference type="EMDB" id="EMD-12764"/>
<dbReference type="EMDB" id="EMD-12845"/>
<dbReference type="EMDB" id="EMD-12846"/>
<dbReference type="EMDB" id="EMD-12847"/>
<dbReference type="EMDB" id="EMD-12865"/>
<dbReference type="EMDB" id="EMD-12867"/>
<dbReference type="EMDB" id="EMD-12868"/>
<dbReference type="EMDB" id="EMD-12869"/>
<dbReference type="EMDB" id="EMD-12870"/>
<dbReference type="EMDB" id="EMD-12871"/>
<dbReference type="EMDB" id="EMD-12872"/>
<dbReference type="EMDB" id="EMD-12877"/>
<dbReference type="EMDB" id="EMD-12919"/>
<dbReference type="EMDB" id="EMD-12920"/>
<dbReference type="EMDB" id="EMD-12921"/>
<dbReference type="EMDB" id="EMD-12922"/>
<dbReference type="EMDB" id="EMD-12923"/>
<dbReference type="EMDB" id="EMD-12924"/>
<dbReference type="EMDB" id="EMD-12925"/>
<dbReference type="EMDB" id="EMD-12926"/>
<dbReference type="EMDB" id="EMD-12927"/>
<dbReference type="EMDB" id="EMD-13329"/>
<dbReference type="EMDB" id="EMD-13562"/>
<dbReference type="EMDB" id="EMD-13965"/>
<dbReference type="EMDB" id="EMD-13967"/>
<dbReference type="EMDB" id="EMD-13980"/>
<dbReference type="EMDB" id="EMD-13981"/>
<dbReference type="EMDB" id="EMD-13982"/>
<dbReference type="EMDB" id="EMD-15544"/>
<dbReference type="EMDB" id="EMD-16897"/>
<dbReference type="EMDB" id="EMD-16899"/>
<dbReference type="EMDB" id="EMD-17719"/>
<dbReference type="EMDB" id="EMD-19460"/>
<dbReference type="EMDB" id="EMD-21233"/>
<dbReference type="EMDB" id="EMD-21242"/>
<dbReference type="EMDB" id="EMD-23096"/>
<dbReference type="EMDB" id="EMD-23121"/>
<dbReference type="EMDB" id="EMD-36836"/>
<dbReference type="EMDB" id="EMD-36837"/>
<dbReference type="EMDB" id="EMD-3842"/>
<dbReference type="EMDB" id="EMD-3843"/>
<dbReference type="EMDB" id="EMD-38632"/>
<dbReference type="EMDB" id="EMD-38633"/>
<dbReference type="EMDB" id="EMD-38634"/>
<dbReference type="EMDB" id="EMD-38635"/>
<dbReference type="EMDB" id="EMD-4434"/>
<dbReference type="SMR" id="Q9NRX2"/>
<dbReference type="BioGRID" id="121968">
    <property type="interactions" value="172"/>
</dbReference>
<dbReference type="ComplexPortal" id="CPX-5226">
    <property type="entry name" value="39S mitochondrial large ribosomal subunit"/>
</dbReference>
<dbReference type="CORUM" id="Q9NRX2"/>
<dbReference type="FunCoup" id="Q9NRX2">
    <property type="interactions" value="2323"/>
</dbReference>
<dbReference type="IntAct" id="Q9NRX2">
    <property type="interactions" value="84"/>
</dbReference>
<dbReference type="MINT" id="Q9NRX2"/>
<dbReference type="STRING" id="9606.ENSP00000288937"/>
<dbReference type="GlyGen" id="Q9NRX2">
    <property type="glycosylation" value="1 site, 1 O-linked glycan (1 site)"/>
</dbReference>
<dbReference type="iPTMnet" id="Q9NRX2"/>
<dbReference type="PhosphoSitePlus" id="Q9NRX2"/>
<dbReference type="SwissPalm" id="Q9NRX2"/>
<dbReference type="BioMuta" id="MRPL17"/>
<dbReference type="DMDM" id="74752931"/>
<dbReference type="jPOST" id="Q9NRX2"/>
<dbReference type="MassIVE" id="Q9NRX2"/>
<dbReference type="PaxDb" id="9606-ENSP00000288937"/>
<dbReference type="PeptideAtlas" id="Q9NRX2"/>
<dbReference type="ProteomicsDB" id="82433"/>
<dbReference type="Pumba" id="Q9NRX2"/>
<dbReference type="TopDownProteomics" id="Q9NRX2"/>
<dbReference type="Antibodypedia" id="64019">
    <property type="antibodies" value="54 antibodies from 19 providers"/>
</dbReference>
<dbReference type="DNASU" id="63875"/>
<dbReference type="Ensembl" id="ENST00000288937.7">
    <property type="protein sequence ID" value="ENSP00000288937.6"/>
    <property type="gene ID" value="ENSG00000158042.9"/>
</dbReference>
<dbReference type="GeneID" id="63875"/>
<dbReference type="KEGG" id="hsa:63875"/>
<dbReference type="MANE-Select" id="ENST00000288937.7">
    <property type="protein sequence ID" value="ENSP00000288937.6"/>
    <property type="RefSeq nucleotide sequence ID" value="NM_022061.4"/>
    <property type="RefSeq protein sequence ID" value="NP_071344.1"/>
</dbReference>
<dbReference type="UCSC" id="uc001men.3">
    <property type="organism name" value="human"/>
</dbReference>
<dbReference type="AGR" id="HGNC:14053"/>
<dbReference type="CTD" id="63875"/>
<dbReference type="DisGeNET" id="63875"/>
<dbReference type="GeneCards" id="MRPL17"/>
<dbReference type="HGNC" id="HGNC:14053">
    <property type="gene designation" value="MRPL17"/>
</dbReference>
<dbReference type="HPA" id="ENSG00000158042">
    <property type="expression patterns" value="Low tissue specificity"/>
</dbReference>
<dbReference type="MIM" id="611830">
    <property type="type" value="gene"/>
</dbReference>
<dbReference type="neXtProt" id="NX_Q9NRX2"/>
<dbReference type="OpenTargets" id="ENSG00000158042"/>
<dbReference type="PharmGKB" id="PA30946"/>
<dbReference type="VEuPathDB" id="HostDB:ENSG00000158042"/>
<dbReference type="eggNOG" id="KOG3280">
    <property type="taxonomic scope" value="Eukaryota"/>
</dbReference>
<dbReference type="GeneTree" id="ENSGT00390000010698"/>
<dbReference type="HOGENOM" id="CLU_074407_3_2_1"/>
<dbReference type="InParanoid" id="Q9NRX2"/>
<dbReference type="OMA" id="HKPTMEM"/>
<dbReference type="OrthoDB" id="275000at2759"/>
<dbReference type="PAN-GO" id="Q9NRX2">
    <property type="GO annotations" value="2 GO annotations based on evolutionary models"/>
</dbReference>
<dbReference type="PhylomeDB" id="Q9NRX2"/>
<dbReference type="TreeFam" id="TF105844"/>
<dbReference type="PathwayCommons" id="Q9NRX2"/>
<dbReference type="Reactome" id="R-HSA-5368286">
    <property type="pathway name" value="Mitochondrial translation initiation"/>
</dbReference>
<dbReference type="Reactome" id="R-HSA-5389840">
    <property type="pathway name" value="Mitochondrial translation elongation"/>
</dbReference>
<dbReference type="Reactome" id="R-HSA-5419276">
    <property type="pathway name" value="Mitochondrial translation termination"/>
</dbReference>
<dbReference type="SignaLink" id="Q9NRX2"/>
<dbReference type="SIGNOR" id="Q9NRX2"/>
<dbReference type="BioGRID-ORCS" id="63875">
    <property type="hits" value="470 hits in 1176 CRISPR screens"/>
</dbReference>
<dbReference type="CD-CODE" id="91857CE7">
    <property type="entry name" value="Nucleolus"/>
</dbReference>
<dbReference type="ChiTaRS" id="MRPL17">
    <property type="organism name" value="human"/>
</dbReference>
<dbReference type="EvolutionaryTrace" id="Q9NRX2"/>
<dbReference type="GeneWiki" id="MRPL17"/>
<dbReference type="GenomeRNAi" id="63875"/>
<dbReference type="Pharos" id="Q9NRX2">
    <property type="development level" value="Tdark"/>
</dbReference>
<dbReference type="PRO" id="PR:Q9NRX2"/>
<dbReference type="Proteomes" id="UP000005640">
    <property type="component" value="Chromosome 11"/>
</dbReference>
<dbReference type="RNAct" id="Q9NRX2">
    <property type="molecule type" value="protein"/>
</dbReference>
<dbReference type="Bgee" id="ENSG00000158042">
    <property type="expression patterns" value="Expressed in stromal cell of endometrium and 178 other cell types or tissues"/>
</dbReference>
<dbReference type="ExpressionAtlas" id="Q9NRX2">
    <property type="expression patterns" value="baseline and differential"/>
</dbReference>
<dbReference type="GO" id="GO:0005743">
    <property type="term" value="C:mitochondrial inner membrane"/>
    <property type="evidence" value="ECO:0000304"/>
    <property type="project" value="Reactome"/>
</dbReference>
<dbReference type="GO" id="GO:0005762">
    <property type="term" value="C:mitochondrial large ribosomal subunit"/>
    <property type="evidence" value="ECO:0000314"/>
    <property type="project" value="UniProtKB"/>
</dbReference>
<dbReference type="GO" id="GO:0005739">
    <property type="term" value="C:mitochondrion"/>
    <property type="evidence" value="ECO:0000314"/>
    <property type="project" value="UniProtKB"/>
</dbReference>
<dbReference type="GO" id="GO:0019904">
    <property type="term" value="F:protein domain specific binding"/>
    <property type="evidence" value="ECO:0000353"/>
    <property type="project" value="UniProtKB"/>
</dbReference>
<dbReference type="GO" id="GO:0003735">
    <property type="term" value="F:structural constituent of ribosome"/>
    <property type="evidence" value="ECO:0000318"/>
    <property type="project" value="GO_Central"/>
</dbReference>
<dbReference type="GO" id="GO:0032543">
    <property type="term" value="P:mitochondrial translation"/>
    <property type="evidence" value="ECO:0000303"/>
    <property type="project" value="ComplexPortal"/>
</dbReference>
<dbReference type="FunFam" id="3.90.1030.10:FF:000007">
    <property type="entry name" value="39S ribosomal protein L17, mitochondrial"/>
    <property type="match status" value="1"/>
</dbReference>
<dbReference type="Gene3D" id="3.90.1030.10">
    <property type="entry name" value="Ribosomal protein L17"/>
    <property type="match status" value="1"/>
</dbReference>
<dbReference type="InterPro" id="IPR000456">
    <property type="entry name" value="Ribosomal_bL17"/>
</dbReference>
<dbReference type="InterPro" id="IPR036373">
    <property type="entry name" value="Ribosomal_bL17_sf"/>
</dbReference>
<dbReference type="NCBIfam" id="TIGR00059">
    <property type="entry name" value="L17"/>
    <property type="match status" value="1"/>
</dbReference>
<dbReference type="PANTHER" id="PTHR14413:SF16">
    <property type="entry name" value="LARGE RIBOSOMAL SUBUNIT PROTEIN BL17M"/>
    <property type="match status" value="1"/>
</dbReference>
<dbReference type="PANTHER" id="PTHR14413">
    <property type="entry name" value="RIBOSOMAL PROTEIN L17"/>
    <property type="match status" value="1"/>
</dbReference>
<dbReference type="Pfam" id="PF01196">
    <property type="entry name" value="Ribosomal_L17"/>
    <property type="match status" value="1"/>
</dbReference>
<dbReference type="SUPFAM" id="SSF64263">
    <property type="entry name" value="Prokaryotic ribosomal protein L17"/>
    <property type="match status" value="1"/>
</dbReference>
<evidence type="ECO:0000250" key="1">
    <source>
        <dbReference type="UniProtKB" id="Q3T0L3"/>
    </source>
</evidence>
<evidence type="ECO:0000256" key="2">
    <source>
        <dbReference type="SAM" id="MobiDB-lite"/>
    </source>
</evidence>
<evidence type="ECO:0000269" key="3">
    <source>
    </source>
</evidence>
<evidence type="ECO:0000269" key="4">
    <source>
    </source>
</evidence>
<evidence type="ECO:0000269" key="5">
    <source>
    </source>
</evidence>
<evidence type="ECO:0000269" key="6">
    <source>
    </source>
</evidence>
<evidence type="ECO:0000269" key="7">
    <source>
    </source>
</evidence>
<evidence type="ECO:0000303" key="8">
    <source>
    </source>
</evidence>
<evidence type="ECO:0000305" key="9"/>
<evidence type="ECO:0007744" key="10">
    <source>
        <dbReference type="PDB" id="3J7Y"/>
    </source>
</evidence>
<evidence type="ECO:0007744" key="11">
    <source>
        <dbReference type="PDB" id="3J9M"/>
    </source>
</evidence>
<evidence type="ECO:0007744" key="12">
    <source>
        <dbReference type="PDB" id="5OOL"/>
    </source>
</evidence>
<evidence type="ECO:0007744" key="13">
    <source>
        <dbReference type="PDB" id="5OOM"/>
    </source>
</evidence>
<evidence type="ECO:0007744" key="14">
    <source>
        <dbReference type="PDB" id="7QH6"/>
    </source>
</evidence>
<evidence type="ECO:0007744" key="15">
    <source>
        <dbReference type="PDB" id="7QH7"/>
    </source>
</evidence>
<evidence type="ECO:0007829" key="16">
    <source>
        <dbReference type="PDB" id="3J7Y"/>
    </source>
</evidence>
<evidence type="ECO:0007829" key="17">
    <source>
        <dbReference type="PDB" id="5OOL"/>
    </source>
</evidence>
<evidence type="ECO:0007829" key="18">
    <source>
        <dbReference type="PDB" id="7OF0"/>
    </source>
</evidence>
<feature type="transit peptide" description="Mitochondrion" evidence="1">
    <location>
        <begin position="1"/>
        <end position="8"/>
    </location>
</feature>
<feature type="chain" id="PRO_0000237331" description="Large ribosomal subunit protein bL17m">
    <location>
        <begin position="9"/>
        <end position="175"/>
    </location>
</feature>
<feature type="region of interest" description="Disordered" evidence="2">
    <location>
        <begin position="155"/>
        <end position="175"/>
    </location>
</feature>
<feature type="compositionally biased region" description="Polar residues" evidence="2">
    <location>
        <begin position="161"/>
        <end position="175"/>
    </location>
</feature>
<feature type="sequence conflict" description="In Ref. 2; CAG33458." evidence="9" ref="2">
    <original>T</original>
    <variation>A</variation>
    <location>
        <position position="105"/>
    </location>
</feature>
<feature type="strand" evidence="16">
    <location>
        <begin position="19"/>
        <end position="21"/>
    </location>
</feature>
<feature type="helix" evidence="18">
    <location>
        <begin position="22"/>
        <end position="39"/>
    </location>
</feature>
<feature type="strand" evidence="18">
    <location>
        <begin position="40"/>
        <end position="45"/>
    </location>
</feature>
<feature type="helix" evidence="18">
    <location>
        <begin position="46"/>
        <end position="65"/>
    </location>
</feature>
<feature type="helix" evidence="18">
    <location>
        <begin position="70"/>
        <end position="79"/>
    </location>
</feature>
<feature type="strand" evidence="17">
    <location>
        <begin position="81"/>
        <end position="83"/>
    </location>
</feature>
<feature type="helix" evidence="18">
    <location>
        <begin position="85"/>
        <end position="91"/>
    </location>
</feature>
<feature type="helix" evidence="18">
    <location>
        <begin position="93"/>
        <end position="97"/>
    </location>
</feature>
<feature type="strand" evidence="18">
    <location>
        <begin position="105"/>
        <end position="110"/>
    </location>
</feature>
<feature type="turn" evidence="18">
    <location>
        <begin position="114"/>
        <end position="116"/>
    </location>
</feature>
<feature type="strand" evidence="18">
    <location>
        <begin position="120"/>
        <end position="125"/>
    </location>
</feature>
<feature type="helix" evidence="18">
    <location>
        <begin position="144"/>
        <end position="159"/>
    </location>
</feature>
<comment type="subunit">
    <text evidence="4 5 6 7">Component of the mitochondrial large ribosomal subunit (mt-LSU) (PubMed:25278503, PubMed:25838379, PubMed:28892042, PubMed:35177605). Mature mammalian 55S mitochondrial ribosomes consist of a small (28S) and a large (39S) subunit. The 28S small subunit contains a 12S ribosomal RNA (12S mt-rRNA) and 30 different proteins. The 39S large subunit contains a 16S rRNA (16S mt-rRNA), a copy of mitochondrial valine transfer RNA (mt-tRNA(Val)), which plays an integral structural role, and 52 different proteins.</text>
</comment>
<comment type="interaction">
    <interactant intactId="EBI-7825154">
        <id>Q9NRX2</id>
    </interactant>
    <interactant intactId="EBI-352986">
        <id>P52597</id>
        <label>HNRNPF</label>
    </interactant>
    <organismsDiffer>false</organismsDiffer>
    <experiments>3</experiments>
</comment>
<comment type="interaction">
    <interactant intactId="EBI-7825154">
        <id>Q9NRX2</id>
    </interactant>
    <interactant intactId="EBI-12867288">
        <id>Q8WUN7</id>
        <label>UBTD2</label>
    </interactant>
    <organismsDiffer>false</organismsDiffer>
    <experiments>3</experiments>
</comment>
<comment type="subcellular location">
    <subcellularLocation>
        <location evidence="4 5 6">Mitochondrion</location>
    </subcellularLocation>
</comment>
<comment type="tissue specificity">
    <text evidence="3">Detected in adrenal gland, mammary gland and adipose tissue.</text>
</comment>
<comment type="similarity">
    <text evidence="9">Belongs to the bacterial ribosomal protein bL17 family.</text>
</comment>
<comment type="sequence caution" evidence="9">
    <conflict type="frameshift">
        <sequence resource="EMBL-CDS" id="AAG49441"/>
    </conflict>
</comment>
<sequence length="175" mass="20050">MRLSVAAAISHGRVFRRMGLGPESRIHLLRNLLTGLVRHERIEAPWARVDEMRGYAEKLIDYGKLGDTNERAMRMADFWLTEKDLIPKLFQVLAPRYKDQTGGYTRMLQIPNRSLDRAKMAVIEYKGNCLPPLPLPRRDSHLTLLNQLLQGLRQDLRQSQEASNHSSHTAQTPGI</sequence>
<gene>
    <name type="primary">MRPL17</name>
    <name type="synonym">LIP2</name>
</gene>
<accession>Q9NRX2</accession>
<accession>D3DQU3</accession>
<accession>Q6IAH8</accession>
<accession>Q96Q53</accession>
<accession>Q9C066</accession>
<organism>
    <name type="scientific">Homo sapiens</name>
    <name type="common">Human</name>
    <dbReference type="NCBI Taxonomy" id="9606"/>
    <lineage>
        <taxon>Eukaryota</taxon>
        <taxon>Metazoa</taxon>
        <taxon>Chordata</taxon>
        <taxon>Craniata</taxon>
        <taxon>Vertebrata</taxon>
        <taxon>Euteleostomi</taxon>
        <taxon>Mammalia</taxon>
        <taxon>Eutheria</taxon>
        <taxon>Euarchontoglires</taxon>
        <taxon>Primates</taxon>
        <taxon>Haplorrhini</taxon>
        <taxon>Catarrhini</taxon>
        <taxon>Hominidae</taxon>
        <taxon>Homo</taxon>
    </lineage>
</organism>